<sequence length="486" mass="52933">MGKFVEKLEKAIKGYTFDDVLLIPQATEVEPKDVDVSTRITPNVKLNIPILSAAMDTVTEWEMAVAMAREGGLGVIHRNMGIEEQVEQVKRVKRAERLIVEDVITIAPDETVDFALFLMEKHGIDGLPVVEDEKVVGIITKKDIAAREGKLVKELMTKEVITVPESIEVEEALKIMIENRIDRLPVVDERGKLVGLITMSDLVARKKYKNAVRDENGELLVAAAVSPFDIKRAIELDKAGVDVIVVDTAHAHNLKAIKSMKEMRQKVDADFIVGNIANPKAVDDLTFADAVKVGIGPGSICTTRIVAGVGVPQITAVAMVADRAQEYGLYVIADGGIRYSGDIVKAIAAGADAVMLGNLLAGTKEAPGKEVIINGRKYKQYRGMGSLGAMMKGGAERYYQGGYMKTRKFVPEGVEGVVPYRGTVSEVLYQLVGGLKAGMGYVGARNIRELKEKGEFVIITHAGIKESHPHDIIITNEAPNYPLEKF</sequence>
<feature type="chain" id="PRO_0000093722" description="Inosine-5'-monophosphate dehydrogenase">
    <location>
        <begin position="1"/>
        <end position="486"/>
    </location>
</feature>
<feature type="domain" description="CBS 1" evidence="1">
    <location>
        <begin position="99"/>
        <end position="154"/>
    </location>
</feature>
<feature type="domain" description="CBS 2" evidence="1">
    <location>
        <begin position="156"/>
        <end position="215"/>
    </location>
</feature>
<feature type="active site" description="Thioimidate intermediate" evidence="1">
    <location>
        <position position="301"/>
    </location>
</feature>
<feature type="active site" description="Proton acceptor" evidence="1">
    <location>
        <position position="397"/>
    </location>
</feature>
<feature type="binding site" evidence="1">
    <location>
        <position position="247"/>
    </location>
    <ligand>
        <name>NAD(+)</name>
        <dbReference type="ChEBI" id="CHEBI:57540"/>
    </ligand>
</feature>
<feature type="binding site" evidence="1">
    <location>
        <begin position="294"/>
        <end position="296"/>
    </location>
    <ligand>
        <name>NAD(+)</name>
        <dbReference type="ChEBI" id="CHEBI:57540"/>
    </ligand>
</feature>
<feature type="binding site" description="in other chain" evidence="1">
    <location>
        <position position="296"/>
    </location>
    <ligand>
        <name>K(+)</name>
        <dbReference type="ChEBI" id="CHEBI:29103"/>
        <note>ligand shared between two tetrameric partners</note>
    </ligand>
</feature>
<feature type="binding site" description="in other chain" evidence="1">
    <location>
        <position position="298"/>
    </location>
    <ligand>
        <name>K(+)</name>
        <dbReference type="ChEBI" id="CHEBI:29103"/>
        <note>ligand shared between two tetrameric partners</note>
    </ligand>
</feature>
<feature type="binding site">
    <location>
        <position position="299"/>
    </location>
    <ligand>
        <name>IMP</name>
        <dbReference type="ChEBI" id="CHEBI:58053"/>
    </ligand>
</feature>
<feature type="binding site" description="in other chain" evidence="1">
    <location>
        <position position="301"/>
    </location>
    <ligand>
        <name>K(+)</name>
        <dbReference type="ChEBI" id="CHEBI:29103"/>
        <note>ligand shared between two tetrameric partners</note>
    </ligand>
</feature>
<feature type="binding site">
    <location>
        <begin position="334"/>
        <end position="336"/>
    </location>
    <ligand>
        <name>IMP</name>
        <dbReference type="ChEBI" id="CHEBI:58053"/>
    </ligand>
</feature>
<feature type="binding site">
    <location>
        <begin position="357"/>
        <end position="358"/>
    </location>
    <ligand>
        <name>IMP</name>
        <dbReference type="ChEBI" id="CHEBI:58053"/>
    </ligand>
</feature>
<feature type="binding site">
    <location>
        <begin position="381"/>
        <end position="385"/>
    </location>
    <ligand>
        <name>IMP</name>
        <dbReference type="ChEBI" id="CHEBI:58053"/>
    </ligand>
</feature>
<feature type="binding site">
    <location>
        <position position="412"/>
    </location>
    <ligand>
        <name>IMP</name>
        <dbReference type="ChEBI" id="CHEBI:58053"/>
    </ligand>
</feature>
<feature type="binding site" evidence="1">
    <location>
        <position position="466"/>
    </location>
    <ligand>
        <name>K(+)</name>
        <dbReference type="ChEBI" id="CHEBI:29103"/>
        <note>ligand shared between two tetrameric partners</note>
    </ligand>
</feature>
<feature type="binding site" evidence="1">
    <location>
        <position position="467"/>
    </location>
    <ligand>
        <name>K(+)</name>
        <dbReference type="ChEBI" id="CHEBI:29103"/>
        <note>ligand shared between two tetrameric partners</note>
    </ligand>
</feature>
<feature type="binding site" evidence="1">
    <location>
        <position position="468"/>
    </location>
    <ligand>
        <name>K(+)</name>
        <dbReference type="ChEBI" id="CHEBI:29103"/>
        <note>ligand shared between two tetrameric partners</note>
    </ligand>
</feature>
<feature type="helix" evidence="2">
    <location>
        <begin position="4"/>
        <end position="9"/>
    </location>
</feature>
<feature type="helix" evidence="2">
    <location>
        <begin position="17"/>
        <end position="19"/>
    </location>
</feature>
<feature type="strand" evidence="2">
    <location>
        <begin position="20"/>
        <end position="22"/>
    </location>
</feature>
<feature type="strand" evidence="2">
    <location>
        <begin position="38"/>
        <end position="41"/>
    </location>
</feature>
<feature type="strand" evidence="2">
    <location>
        <begin position="44"/>
        <end position="52"/>
    </location>
</feature>
<feature type="turn" evidence="2">
    <location>
        <begin position="56"/>
        <end position="58"/>
    </location>
</feature>
<feature type="helix" evidence="2">
    <location>
        <begin position="61"/>
        <end position="69"/>
    </location>
</feature>
<feature type="strand" evidence="2">
    <location>
        <begin position="73"/>
        <end position="76"/>
    </location>
</feature>
<feature type="strand" evidence="2">
    <location>
        <begin position="78"/>
        <end position="80"/>
    </location>
</feature>
<feature type="helix" evidence="2">
    <location>
        <begin position="82"/>
        <end position="93"/>
    </location>
</feature>
<feature type="strand" evidence="2">
    <location>
        <begin position="222"/>
        <end position="225"/>
    </location>
</feature>
<feature type="helix" evidence="2">
    <location>
        <begin position="230"/>
        <end position="238"/>
    </location>
</feature>
<feature type="strand" evidence="2">
    <location>
        <begin position="242"/>
        <end position="247"/>
    </location>
</feature>
<feature type="helix" evidence="2">
    <location>
        <begin position="254"/>
        <end position="265"/>
    </location>
</feature>
<feature type="strand" evidence="2">
    <location>
        <begin position="269"/>
        <end position="276"/>
    </location>
</feature>
<feature type="helix" evidence="2">
    <location>
        <begin position="279"/>
        <end position="282"/>
    </location>
</feature>
<feature type="strand" evidence="2">
    <location>
        <begin position="288"/>
        <end position="293"/>
    </location>
</feature>
<feature type="helix" evidence="2">
    <location>
        <begin position="303"/>
        <end position="306"/>
    </location>
</feature>
<feature type="helix" evidence="2">
    <location>
        <begin position="313"/>
        <end position="326"/>
    </location>
</feature>
<feature type="strand" evidence="2">
    <location>
        <begin position="330"/>
        <end position="335"/>
    </location>
</feature>
<feature type="helix" evidence="2">
    <location>
        <begin position="340"/>
        <end position="348"/>
    </location>
</feature>
<feature type="strand" evidence="2">
    <location>
        <begin position="352"/>
        <end position="357"/>
    </location>
</feature>
<feature type="turn" evidence="2">
    <location>
        <begin position="358"/>
        <end position="362"/>
    </location>
</feature>
<feature type="strand" evidence="2">
    <location>
        <begin position="370"/>
        <end position="373"/>
    </location>
</feature>
<feature type="strand" evidence="2">
    <location>
        <begin position="376"/>
        <end position="382"/>
    </location>
</feature>
<feature type="helix" evidence="2">
    <location>
        <begin position="387"/>
        <end position="390"/>
    </location>
</feature>
<feature type="strand" evidence="2">
    <location>
        <begin position="415"/>
        <end position="419"/>
    </location>
</feature>
<feature type="helix" evidence="2">
    <location>
        <begin position="424"/>
        <end position="441"/>
    </location>
</feature>
<feature type="helix" evidence="2">
    <location>
        <begin position="447"/>
        <end position="453"/>
    </location>
</feature>
<feature type="strand" evidence="2">
    <location>
        <begin position="456"/>
        <end position="458"/>
    </location>
</feature>
<feature type="helix" evidence="2">
    <location>
        <begin position="461"/>
        <end position="467"/>
    </location>
</feature>
<protein>
    <recommendedName>
        <fullName evidence="1">Inosine-5'-monophosphate dehydrogenase</fullName>
        <shortName evidence="1">IMP dehydrogenase</shortName>
        <shortName evidence="1">IMPD</shortName>
        <shortName evidence="1">IMPDH</shortName>
        <ecNumber evidence="1">1.1.1.205</ecNumber>
    </recommendedName>
</protein>
<name>IMDH_PYRHO</name>
<dbReference type="EC" id="1.1.1.205" evidence="1"/>
<dbReference type="EMBL" id="BA000001">
    <property type="protein sequence ID" value="BAA29380.1"/>
    <property type="molecule type" value="Genomic_DNA"/>
</dbReference>
<dbReference type="PIR" id="E71456">
    <property type="entry name" value="E71456"/>
</dbReference>
<dbReference type="RefSeq" id="WP_010884401.1">
    <property type="nucleotide sequence ID" value="NC_000961.1"/>
</dbReference>
<dbReference type="PDB" id="2CU0">
    <property type="method" value="X-ray"/>
    <property type="resolution" value="2.10 A"/>
    <property type="chains" value="A/B=1-486"/>
</dbReference>
<dbReference type="PDBsum" id="2CU0"/>
<dbReference type="SMR" id="O58045"/>
<dbReference type="STRING" id="70601.gene:9377224"/>
<dbReference type="EnsemblBacteria" id="BAA29380">
    <property type="protein sequence ID" value="BAA29380"/>
    <property type="gene ID" value="BAA29380"/>
</dbReference>
<dbReference type="GeneID" id="1444188"/>
<dbReference type="KEGG" id="pho:PH0307"/>
<dbReference type="eggNOG" id="arCOG00612">
    <property type="taxonomic scope" value="Archaea"/>
</dbReference>
<dbReference type="OrthoDB" id="21361at2157"/>
<dbReference type="UniPathway" id="UPA00601">
    <property type="reaction ID" value="UER00295"/>
</dbReference>
<dbReference type="EvolutionaryTrace" id="O58045"/>
<dbReference type="Proteomes" id="UP000000752">
    <property type="component" value="Chromosome"/>
</dbReference>
<dbReference type="GO" id="GO:0003938">
    <property type="term" value="F:IMP dehydrogenase activity"/>
    <property type="evidence" value="ECO:0007669"/>
    <property type="project" value="UniProtKB-UniRule"/>
</dbReference>
<dbReference type="GO" id="GO:0046872">
    <property type="term" value="F:metal ion binding"/>
    <property type="evidence" value="ECO:0007669"/>
    <property type="project" value="UniProtKB-UniRule"/>
</dbReference>
<dbReference type="GO" id="GO:0000166">
    <property type="term" value="F:nucleotide binding"/>
    <property type="evidence" value="ECO:0007669"/>
    <property type="project" value="UniProtKB-UniRule"/>
</dbReference>
<dbReference type="GO" id="GO:0006177">
    <property type="term" value="P:GMP biosynthetic process"/>
    <property type="evidence" value="ECO:0007669"/>
    <property type="project" value="UniProtKB-UniRule"/>
</dbReference>
<dbReference type="GO" id="GO:0006183">
    <property type="term" value="P:GTP biosynthetic process"/>
    <property type="evidence" value="ECO:0007669"/>
    <property type="project" value="TreeGrafter"/>
</dbReference>
<dbReference type="CDD" id="cd04601">
    <property type="entry name" value="CBS_pair_IMPDH"/>
    <property type="match status" value="1"/>
</dbReference>
<dbReference type="CDD" id="cd00381">
    <property type="entry name" value="IMPDH"/>
    <property type="match status" value="1"/>
</dbReference>
<dbReference type="FunFam" id="3.20.20.70:FF:000003">
    <property type="entry name" value="GMP reductase"/>
    <property type="match status" value="1"/>
</dbReference>
<dbReference type="Gene3D" id="3.20.20.70">
    <property type="entry name" value="Aldolase class I"/>
    <property type="match status" value="1"/>
</dbReference>
<dbReference type="HAMAP" id="MF_01964">
    <property type="entry name" value="IMPDH"/>
    <property type="match status" value="1"/>
</dbReference>
<dbReference type="InterPro" id="IPR013785">
    <property type="entry name" value="Aldolase_TIM"/>
</dbReference>
<dbReference type="InterPro" id="IPR000644">
    <property type="entry name" value="CBS_dom"/>
</dbReference>
<dbReference type="InterPro" id="IPR046342">
    <property type="entry name" value="CBS_dom_sf"/>
</dbReference>
<dbReference type="InterPro" id="IPR005990">
    <property type="entry name" value="IMP_DH"/>
</dbReference>
<dbReference type="InterPro" id="IPR015875">
    <property type="entry name" value="IMP_DH/GMP_Rdtase_CS"/>
</dbReference>
<dbReference type="InterPro" id="IPR001093">
    <property type="entry name" value="IMP_DH_GMPRt"/>
</dbReference>
<dbReference type="NCBIfam" id="TIGR01302">
    <property type="entry name" value="IMP_dehydrog"/>
    <property type="match status" value="1"/>
</dbReference>
<dbReference type="PANTHER" id="PTHR11911:SF111">
    <property type="entry name" value="INOSINE-5'-MONOPHOSPHATE DEHYDROGENASE"/>
    <property type="match status" value="1"/>
</dbReference>
<dbReference type="PANTHER" id="PTHR11911">
    <property type="entry name" value="INOSINE-5-MONOPHOSPHATE DEHYDROGENASE RELATED"/>
    <property type="match status" value="1"/>
</dbReference>
<dbReference type="Pfam" id="PF00571">
    <property type="entry name" value="CBS"/>
    <property type="match status" value="2"/>
</dbReference>
<dbReference type="Pfam" id="PF00478">
    <property type="entry name" value="IMPDH"/>
    <property type="match status" value="1"/>
</dbReference>
<dbReference type="PIRSF" id="PIRSF000130">
    <property type="entry name" value="IMPDH"/>
    <property type="match status" value="1"/>
</dbReference>
<dbReference type="SMART" id="SM00116">
    <property type="entry name" value="CBS"/>
    <property type="match status" value="2"/>
</dbReference>
<dbReference type="SMART" id="SM01240">
    <property type="entry name" value="IMPDH"/>
    <property type="match status" value="1"/>
</dbReference>
<dbReference type="SUPFAM" id="SSF54631">
    <property type="entry name" value="CBS-domain pair"/>
    <property type="match status" value="1"/>
</dbReference>
<dbReference type="SUPFAM" id="SSF51412">
    <property type="entry name" value="Inosine monophosphate dehydrogenase (IMPDH)"/>
    <property type="match status" value="1"/>
</dbReference>
<dbReference type="PROSITE" id="PS51371">
    <property type="entry name" value="CBS"/>
    <property type="match status" value="2"/>
</dbReference>
<dbReference type="PROSITE" id="PS00487">
    <property type="entry name" value="IMP_DH_GMP_RED"/>
    <property type="match status" value="1"/>
</dbReference>
<keyword id="KW-0002">3D-structure</keyword>
<keyword id="KW-0129">CBS domain</keyword>
<keyword id="KW-0332">GMP biosynthesis</keyword>
<keyword id="KW-0479">Metal-binding</keyword>
<keyword id="KW-0520">NAD</keyword>
<keyword id="KW-0560">Oxidoreductase</keyword>
<keyword id="KW-0630">Potassium</keyword>
<keyword id="KW-0658">Purine biosynthesis</keyword>
<keyword id="KW-0677">Repeat</keyword>
<evidence type="ECO:0000255" key="1">
    <source>
        <dbReference type="HAMAP-Rule" id="MF_01964"/>
    </source>
</evidence>
<evidence type="ECO:0007829" key="2">
    <source>
        <dbReference type="PDB" id="2CU0"/>
    </source>
</evidence>
<proteinExistence type="evidence at protein level"/>
<gene>
    <name evidence="1" type="primary">guaB</name>
    <name type="ordered locus">PH0307</name>
</gene>
<accession>O58045</accession>
<comment type="function">
    <text evidence="1">Catalyzes the conversion of inosine 5'-phosphate (IMP) to xanthosine 5'-phosphate (XMP), the first committed and rate-limiting step in the de novo synthesis of guanine nucleotides, and therefore plays an important role in the regulation of cell growth.</text>
</comment>
<comment type="catalytic activity">
    <reaction evidence="1">
        <text>IMP + NAD(+) + H2O = XMP + NADH + H(+)</text>
        <dbReference type="Rhea" id="RHEA:11708"/>
        <dbReference type="ChEBI" id="CHEBI:15377"/>
        <dbReference type="ChEBI" id="CHEBI:15378"/>
        <dbReference type="ChEBI" id="CHEBI:57464"/>
        <dbReference type="ChEBI" id="CHEBI:57540"/>
        <dbReference type="ChEBI" id="CHEBI:57945"/>
        <dbReference type="ChEBI" id="CHEBI:58053"/>
        <dbReference type="EC" id="1.1.1.205"/>
    </reaction>
</comment>
<comment type="cofactor">
    <cofactor evidence="1">
        <name>K(+)</name>
        <dbReference type="ChEBI" id="CHEBI:29103"/>
    </cofactor>
</comment>
<comment type="activity regulation">
    <text evidence="1">Mycophenolic acid (MPA) is a non-competitive inhibitor that prevents formation of the closed enzyme conformation by binding to the same site as the amobile flap. In contrast, mizoribine monophosphate (MZP) is a competitive inhibitor that induces the closed conformation. MPA is a potent inhibitor of mammalian IMPDHs but a poor inhibitor of the bacterial enzymes. MZP is a more potent inhibitor of bacterial IMPDH.</text>
</comment>
<comment type="pathway">
    <text evidence="1">Purine metabolism; XMP biosynthesis via de novo pathway; XMP from IMP: step 1/1.</text>
</comment>
<comment type="subunit">
    <text evidence="1">Homotetramer.</text>
</comment>
<comment type="similarity">
    <text evidence="1">Belongs to the IMPDH/GMPR family.</text>
</comment>
<reference key="1">
    <citation type="journal article" date="1998" name="DNA Res.">
        <title>Complete sequence and gene organization of the genome of a hyper-thermophilic archaebacterium, Pyrococcus horikoshii OT3.</title>
        <authorList>
            <person name="Kawarabayasi Y."/>
            <person name="Sawada M."/>
            <person name="Horikawa H."/>
            <person name="Haikawa Y."/>
            <person name="Hino Y."/>
            <person name="Yamamoto S."/>
            <person name="Sekine M."/>
            <person name="Baba S."/>
            <person name="Kosugi H."/>
            <person name="Hosoyama A."/>
            <person name="Nagai Y."/>
            <person name="Sakai M."/>
            <person name="Ogura K."/>
            <person name="Otsuka R."/>
            <person name="Nakazawa H."/>
            <person name="Takamiya M."/>
            <person name="Ohfuku Y."/>
            <person name="Funahashi T."/>
            <person name="Tanaka T."/>
            <person name="Kudoh Y."/>
            <person name="Yamazaki J."/>
            <person name="Kushida N."/>
            <person name="Oguchi A."/>
            <person name="Aoki K."/>
            <person name="Yoshizawa T."/>
            <person name="Nakamura Y."/>
            <person name="Robb F.T."/>
            <person name="Horikoshi K."/>
            <person name="Masuchi Y."/>
            <person name="Shizuya H."/>
            <person name="Kikuchi H."/>
        </authorList>
    </citation>
    <scope>NUCLEOTIDE SEQUENCE [LARGE SCALE GENOMIC DNA]</scope>
    <source>
        <strain>ATCC 700860 / DSM 12428 / JCM 9974 / NBRC 100139 / OT-3</strain>
    </source>
</reference>
<reference key="2">
    <citation type="submission" date="2011-07" db="PDB data bank">
        <title>Crystal structure of inosine-5'-monophosphate dehydrogenase from Pyrococcus horikoshii OT3.</title>
        <authorList>
            <consortium name="RIKEN structural genomics initiative (RSGI)"/>
        </authorList>
    </citation>
    <scope>X-RAY CRYSTALLOGRAPHY (2.1 ANGSTROMS) IN COMPLEX WITH XMP</scope>
    <source>
        <strain>ATCC 700860 / DSM 12428 / JCM 9974 / NBRC 100139 / OT-3</strain>
    </source>
</reference>
<organism>
    <name type="scientific">Pyrococcus horikoshii (strain ATCC 700860 / DSM 12428 / JCM 9974 / NBRC 100139 / OT-3)</name>
    <dbReference type="NCBI Taxonomy" id="70601"/>
    <lineage>
        <taxon>Archaea</taxon>
        <taxon>Methanobacteriati</taxon>
        <taxon>Methanobacteriota</taxon>
        <taxon>Thermococci</taxon>
        <taxon>Thermococcales</taxon>
        <taxon>Thermococcaceae</taxon>
        <taxon>Pyrococcus</taxon>
    </lineage>
</organism>